<organism>
    <name type="scientific">Staphylococcus epidermidis (strain ATCC 35984 / DSM 28319 / BCRC 17069 / CCUG 31568 / BM 3577 / RP62A)</name>
    <dbReference type="NCBI Taxonomy" id="176279"/>
    <lineage>
        <taxon>Bacteria</taxon>
        <taxon>Bacillati</taxon>
        <taxon>Bacillota</taxon>
        <taxon>Bacilli</taxon>
        <taxon>Bacillales</taxon>
        <taxon>Staphylococcaceae</taxon>
        <taxon>Staphylococcus</taxon>
    </lineage>
</organism>
<protein>
    <recommendedName>
        <fullName evidence="1">Energy-coupling factor transporter ATP-binding protein EcfA2</fullName>
        <shortName evidence="1">ECF transporter A component EcfA2</shortName>
        <ecNumber evidence="1">7.-.-.-</ecNumber>
    </recommendedName>
</protein>
<keyword id="KW-0067">ATP-binding</keyword>
<keyword id="KW-1003">Cell membrane</keyword>
<keyword id="KW-0472">Membrane</keyword>
<keyword id="KW-0547">Nucleotide-binding</keyword>
<keyword id="KW-1185">Reference proteome</keyword>
<keyword id="KW-1278">Translocase</keyword>
<keyword id="KW-0813">Transport</keyword>
<name>ECFA2_STAEQ</name>
<comment type="function">
    <text evidence="1">ATP-binding (A) component of a common energy-coupling factor (ECF) ABC-transporter complex. Unlike classic ABC transporters this ECF transporter provides the energy necessary to transport a number of different substrates.</text>
</comment>
<comment type="subunit">
    <text evidence="1">Forms a stable energy-coupling factor (ECF) transporter complex composed of 2 membrane-embedded substrate-binding proteins (S component), 2 ATP-binding proteins (A component) and 2 transmembrane proteins (T component).</text>
</comment>
<comment type="subcellular location">
    <subcellularLocation>
        <location evidence="1">Cell membrane</location>
        <topology evidence="1">Peripheral membrane protein</topology>
    </subcellularLocation>
</comment>
<comment type="similarity">
    <text evidence="1">Belongs to the ABC transporter superfamily. Energy-coupling factor EcfA family.</text>
</comment>
<dbReference type="EC" id="7.-.-.-" evidence="1"/>
<dbReference type="EMBL" id="CP000029">
    <property type="protein sequence ID" value="AAW55195.1"/>
    <property type="molecule type" value="Genomic_DNA"/>
</dbReference>
<dbReference type="RefSeq" id="WP_002456988.1">
    <property type="nucleotide sequence ID" value="NC_002976.3"/>
</dbReference>
<dbReference type="SMR" id="Q5HM28"/>
<dbReference type="STRING" id="176279.SERP1802"/>
<dbReference type="KEGG" id="ser:SERP1802"/>
<dbReference type="eggNOG" id="COG1122">
    <property type="taxonomic scope" value="Bacteria"/>
</dbReference>
<dbReference type="HOGENOM" id="CLU_000604_1_22_9"/>
<dbReference type="Proteomes" id="UP000000531">
    <property type="component" value="Chromosome"/>
</dbReference>
<dbReference type="GO" id="GO:0043190">
    <property type="term" value="C:ATP-binding cassette (ABC) transporter complex"/>
    <property type="evidence" value="ECO:0007669"/>
    <property type="project" value="TreeGrafter"/>
</dbReference>
<dbReference type="GO" id="GO:0005524">
    <property type="term" value="F:ATP binding"/>
    <property type="evidence" value="ECO:0007669"/>
    <property type="project" value="UniProtKB-KW"/>
</dbReference>
<dbReference type="GO" id="GO:0016887">
    <property type="term" value="F:ATP hydrolysis activity"/>
    <property type="evidence" value="ECO:0007669"/>
    <property type="project" value="InterPro"/>
</dbReference>
<dbReference type="GO" id="GO:0042626">
    <property type="term" value="F:ATPase-coupled transmembrane transporter activity"/>
    <property type="evidence" value="ECO:0007669"/>
    <property type="project" value="TreeGrafter"/>
</dbReference>
<dbReference type="CDD" id="cd03225">
    <property type="entry name" value="ABC_cobalt_CbiO_domain1"/>
    <property type="match status" value="1"/>
</dbReference>
<dbReference type="FunFam" id="3.40.50.300:FF:000224">
    <property type="entry name" value="Energy-coupling factor transporter ATP-binding protein EcfA"/>
    <property type="match status" value="1"/>
</dbReference>
<dbReference type="Gene3D" id="3.40.50.300">
    <property type="entry name" value="P-loop containing nucleotide triphosphate hydrolases"/>
    <property type="match status" value="1"/>
</dbReference>
<dbReference type="InterPro" id="IPR003593">
    <property type="entry name" value="AAA+_ATPase"/>
</dbReference>
<dbReference type="InterPro" id="IPR003439">
    <property type="entry name" value="ABC_transporter-like_ATP-bd"/>
</dbReference>
<dbReference type="InterPro" id="IPR017871">
    <property type="entry name" value="ABC_transporter-like_CS"/>
</dbReference>
<dbReference type="InterPro" id="IPR015856">
    <property type="entry name" value="ABC_transpr_CbiO/EcfA_su"/>
</dbReference>
<dbReference type="InterPro" id="IPR050095">
    <property type="entry name" value="ECF_ABC_transporter_ATP-bd"/>
</dbReference>
<dbReference type="InterPro" id="IPR030946">
    <property type="entry name" value="EcfA2"/>
</dbReference>
<dbReference type="InterPro" id="IPR027417">
    <property type="entry name" value="P-loop_NTPase"/>
</dbReference>
<dbReference type="NCBIfam" id="TIGR04521">
    <property type="entry name" value="ECF_ATPase_2"/>
    <property type="match status" value="1"/>
</dbReference>
<dbReference type="NCBIfam" id="NF010166">
    <property type="entry name" value="PRK13646.1"/>
    <property type="match status" value="1"/>
</dbReference>
<dbReference type="PANTHER" id="PTHR43553:SF27">
    <property type="entry name" value="ENERGY-COUPLING FACTOR TRANSPORTER ATP-BINDING PROTEIN ECFA2"/>
    <property type="match status" value="1"/>
</dbReference>
<dbReference type="PANTHER" id="PTHR43553">
    <property type="entry name" value="HEAVY METAL TRANSPORTER"/>
    <property type="match status" value="1"/>
</dbReference>
<dbReference type="Pfam" id="PF00005">
    <property type="entry name" value="ABC_tran"/>
    <property type="match status" value="1"/>
</dbReference>
<dbReference type="SMART" id="SM00382">
    <property type="entry name" value="AAA"/>
    <property type="match status" value="1"/>
</dbReference>
<dbReference type="SUPFAM" id="SSF52540">
    <property type="entry name" value="P-loop containing nucleoside triphosphate hydrolases"/>
    <property type="match status" value="1"/>
</dbReference>
<dbReference type="PROSITE" id="PS00211">
    <property type="entry name" value="ABC_TRANSPORTER_1"/>
    <property type="match status" value="1"/>
</dbReference>
<dbReference type="PROSITE" id="PS50893">
    <property type="entry name" value="ABC_TRANSPORTER_2"/>
    <property type="match status" value="1"/>
</dbReference>
<dbReference type="PROSITE" id="PS51246">
    <property type="entry name" value="CBIO"/>
    <property type="match status" value="1"/>
</dbReference>
<gene>
    <name evidence="1" type="primary">ecfA2</name>
    <name type="synonym">cbiO2</name>
    <name type="ordered locus">SERP1802</name>
</gene>
<feature type="chain" id="PRO_0000092082" description="Energy-coupling factor transporter ATP-binding protein EcfA2">
    <location>
        <begin position="1"/>
        <end position="286"/>
    </location>
</feature>
<feature type="domain" description="ABC transporter" evidence="1">
    <location>
        <begin position="3"/>
        <end position="246"/>
    </location>
</feature>
<feature type="binding site" evidence="1">
    <location>
        <begin position="40"/>
        <end position="47"/>
    </location>
    <ligand>
        <name>ATP</name>
        <dbReference type="ChEBI" id="CHEBI:30616"/>
    </ligand>
</feature>
<reference key="1">
    <citation type="journal article" date="2005" name="J. Bacteriol.">
        <title>Insights on evolution of virulence and resistance from the complete genome analysis of an early methicillin-resistant Staphylococcus aureus strain and a biofilm-producing methicillin-resistant Staphylococcus epidermidis strain.</title>
        <authorList>
            <person name="Gill S.R."/>
            <person name="Fouts D.E."/>
            <person name="Archer G.L."/>
            <person name="Mongodin E.F."/>
            <person name="DeBoy R.T."/>
            <person name="Ravel J."/>
            <person name="Paulsen I.T."/>
            <person name="Kolonay J.F."/>
            <person name="Brinkac L.M."/>
            <person name="Beanan M.J."/>
            <person name="Dodson R.J."/>
            <person name="Daugherty S.C."/>
            <person name="Madupu R."/>
            <person name="Angiuoli S.V."/>
            <person name="Durkin A.S."/>
            <person name="Haft D.H."/>
            <person name="Vamathevan J.J."/>
            <person name="Khouri H."/>
            <person name="Utterback T.R."/>
            <person name="Lee C."/>
            <person name="Dimitrov G."/>
            <person name="Jiang L."/>
            <person name="Qin H."/>
            <person name="Weidman J."/>
            <person name="Tran K."/>
            <person name="Kang K.H."/>
            <person name="Hance I.R."/>
            <person name="Nelson K.E."/>
            <person name="Fraser C.M."/>
        </authorList>
    </citation>
    <scope>NUCLEOTIDE SEQUENCE [LARGE SCALE GENOMIC DNA]</scope>
    <source>
        <strain>ATCC 35984 / DSM 28319 / BCRC 17069 / CCUG 31568 / BM 3577 / RP62A</strain>
    </source>
</reference>
<accession>Q5HM28</accession>
<sequence length="286" mass="32885">MSIQFNQVSYIYQQGTPYEFEAIKNVSLTLEQGKYYAIIGQTGSGKSTLIQHLNALLKPTTGSVNINGLEVTNKTKDKHLRHIRKEVGIVFQFPESQLFEDSVEKEIEFGPKNFNMNLKNVKDKAFQLLLELGFSRNVMSSSPFQMSGGQMRKIAIVSILAMDPQVIILDEPTAGLDPNSKHQVMSLIKKIQIEENKTIILVSHDMDDVARYSDEVVVMNKGTIVEKSNPRNLFNQKTQLLKWHIELPKVVKLQKDIEKKYNMLFPKLAMNEEEFVKLYKEWHHEE</sequence>
<evidence type="ECO:0000255" key="1">
    <source>
        <dbReference type="HAMAP-Rule" id="MF_01710"/>
    </source>
</evidence>
<proteinExistence type="inferred from homology"/>